<proteinExistence type="inferred from homology"/>
<dbReference type="EMBL" id="CP000127">
    <property type="protein sequence ID" value="ABA56584.1"/>
    <property type="molecule type" value="Genomic_DNA"/>
</dbReference>
<dbReference type="RefSeq" id="WP_002813167.1">
    <property type="nucleotide sequence ID" value="NC_007484.1"/>
</dbReference>
<dbReference type="SMR" id="Q3JF12"/>
<dbReference type="FunCoup" id="Q3JF12">
    <property type="interactions" value="505"/>
</dbReference>
<dbReference type="STRING" id="323261.Noc_0042"/>
<dbReference type="KEGG" id="noc:Noc_0042"/>
<dbReference type="eggNOG" id="COG0828">
    <property type="taxonomic scope" value="Bacteria"/>
</dbReference>
<dbReference type="HOGENOM" id="CLU_159258_1_0_6"/>
<dbReference type="InParanoid" id="Q3JF12"/>
<dbReference type="Proteomes" id="UP000006838">
    <property type="component" value="Chromosome"/>
</dbReference>
<dbReference type="GO" id="GO:1990904">
    <property type="term" value="C:ribonucleoprotein complex"/>
    <property type="evidence" value="ECO:0007669"/>
    <property type="project" value="UniProtKB-KW"/>
</dbReference>
<dbReference type="GO" id="GO:0005840">
    <property type="term" value="C:ribosome"/>
    <property type="evidence" value="ECO:0007669"/>
    <property type="project" value="UniProtKB-KW"/>
</dbReference>
<dbReference type="GO" id="GO:0003735">
    <property type="term" value="F:structural constituent of ribosome"/>
    <property type="evidence" value="ECO:0007669"/>
    <property type="project" value="InterPro"/>
</dbReference>
<dbReference type="GO" id="GO:0006412">
    <property type="term" value="P:translation"/>
    <property type="evidence" value="ECO:0007669"/>
    <property type="project" value="UniProtKB-UniRule"/>
</dbReference>
<dbReference type="Gene3D" id="1.20.5.1150">
    <property type="entry name" value="Ribosomal protein S8"/>
    <property type="match status" value="1"/>
</dbReference>
<dbReference type="HAMAP" id="MF_00358">
    <property type="entry name" value="Ribosomal_bS21"/>
    <property type="match status" value="1"/>
</dbReference>
<dbReference type="InterPro" id="IPR001911">
    <property type="entry name" value="Ribosomal_bS21"/>
</dbReference>
<dbReference type="InterPro" id="IPR018278">
    <property type="entry name" value="Ribosomal_bS21_CS"/>
</dbReference>
<dbReference type="InterPro" id="IPR038380">
    <property type="entry name" value="Ribosomal_bS21_sf"/>
</dbReference>
<dbReference type="NCBIfam" id="TIGR00030">
    <property type="entry name" value="S21p"/>
    <property type="match status" value="1"/>
</dbReference>
<dbReference type="PANTHER" id="PTHR21109">
    <property type="entry name" value="MITOCHONDRIAL 28S RIBOSOMAL PROTEIN S21"/>
    <property type="match status" value="1"/>
</dbReference>
<dbReference type="PANTHER" id="PTHR21109:SF22">
    <property type="entry name" value="SMALL RIBOSOMAL SUBUNIT PROTEIN BS21"/>
    <property type="match status" value="1"/>
</dbReference>
<dbReference type="Pfam" id="PF01165">
    <property type="entry name" value="Ribosomal_S21"/>
    <property type="match status" value="1"/>
</dbReference>
<dbReference type="PRINTS" id="PR00976">
    <property type="entry name" value="RIBOSOMALS21"/>
</dbReference>
<dbReference type="PROSITE" id="PS01181">
    <property type="entry name" value="RIBOSOMAL_S21"/>
    <property type="match status" value="1"/>
</dbReference>
<evidence type="ECO:0000255" key="1">
    <source>
        <dbReference type="HAMAP-Rule" id="MF_00358"/>
    </source>
</evidence>
<evidence type="ECO:0000305" key="2"/>
<feature type="chain" id="PRO_0000266715" description="Small ribosomal subunit protein bS21">
    <location>
        <begin position="1"/>
        <end position="71"/>
    </location>
</feature>
<keyword id="KW-1185">Reference proteome</keyword>
<keyword id="KW-0687">Ribonucleoprotein</keyword>
<keyword id="KW-0689">Ribosomal protein</keyword>
<gene>
    <name evidence="1" type="primary">rpsU</name>
    <name type="ordered locus">Noc_0042</name>
</gene>
<name>RS21_NITOC</name>
<organism>
    <name type="scientific">Nitrosococcus oceani (strain ATCC 19707 / BCRC 17464 / JCM 30415 / NCIMB 11848 / C-107)</name>
    <dbReference type="NCBI Taxonomy" id="323261"/>
    <lineage>
        <taxon>Bacteria</taxon>
        <taxon>Pseudomonadati</taxon>
        <taxon>Pseudomonadota</taxon>
        <taxon>Gammaproteobacteria</taxon>
        <taxon>Chromatiales</taxon>
        <taxon>Chromatiaceae</taxon>
        <taxon>Nitrosococcus</taxon>
    </lineage>
</organism>
<reference key="1">
    <citation type="journal article" date="2006" name="Appl. Environ. Microbiol.">
        <title>Complete genome sequence of the marine, chemolithoautotrophic, ammonia-oxidizing bacterium Nitrosococcus oceani ATCC 19707.</title>
        <authorList>
            <person name="Klotz M.G."/>
            <person name="Arp D.J."/>
            <person name="Chain P.S.G."/>
            <person name="El-Sheikh A.F."/>
            <person name="Hauser L.J."/>
            <person name="Hommes N.G."/>
            <person name="Larimer F.W."/>
            <person name="Malfatti S.A."/>
            <person name="Norton J.M."/>
            <person name="Poret-Peterson A.T."/>
            <person name="Vergez L.M."/>
            <person name="Ward B.B."/>
        </authorList>
    </citation>
    <scope>NUCLEOTIDE SEQUENCE [LARGE SCALE GENOMIC DNA]</scope>
    <source>
        <strain>ATCC 19707 / BCRC 17464 / JCM 30415 / NCIMB 11848 / C-107</strain>
    </source>
</reference>
<comment type="similarity">
    <text evidence="1">Belongs to the bacterial ribosomal protein bS21 family.</text>
</comment>
<sequence length="71" mass="8494">MPSVRLKENEPFDVAIRRFKRTCEKAGVLSEVRRREFYEKPTAVRKRKAAAAVKRSMKKLARERARRTRLY</sequence>
<protein>
    <recommendedName>
        <fullName evidence="1">Small ribosomal subunit protein bS21</fullName>
    </recommendedName>
    <alternativeName>
        <fullName evidence="2">30S ribosomal protein S21</fullName>
    </alternativeName>
</protein>
<accession>Q3JF12</accession>